<keyword id="KW-0963">Cytoplasm</keyword>
<keyword id="KW-0408">Iron</keyword>
<keyword id="KW-0479">Metal-binding</keyword>
<keyword id="KW-0539">Nucleus</keyword>
<keyword id="KW-0560">Oxidoreductase</keyword>
<keyword id="KW-1185">Reference proteome</keyword>
<reference key="1">
    <citation type="journal article" date="2005" name="Science">
        <title>The genome of the basidiomycetous yeast and human pathogen Cryptococcus neoformans.</title>
        <authorList>
            <person name="Loftus B.J."/>
            <person name="Fung E."/>
            <person name="Roncaglia P."/>
            <person name="Rowley D."/>
            <person name="Amedeo P."/>
            <person name="Bruno D."/>
            <person name="Vamathevan J."/>
            <person name="Miranda M."/>
            <person name="Anderson I.J."/>
            <person name="Fraser J.A."/>
            <person name="Allen J.E."/>
            <person name="Bosdet I.E."/>
            <person name="Brent M.R."/>
            <person name="Chiu R."/>
            <person name="Doering T.L."/>
            <person name="Donlin M.J."/>
            <person name="D'Souza C.A."/>
            <person name="Fox D.S."/>
            <person name="Grinberg V."/>
            <person name="Fu J."/>
            <person name="Fukushima M."/>
            <person name="Haas B.J."/>
            <person name="Huang J.C."/>
            <person name="Janbon G."/>
            <person name="Jones S.J.M."/>
            <person name="Koo H.L."/>
            <person name="Krzywinski M.I."/>
            <person name="Kwon-Chung K.J."/>
            <person name="Lengeler K.B."/>
            <person name="Maiti R."/>
            <person name="Marra M.A."/>
            <person name="Marra R.E."/>
            <person name="Mathewson C.A."/>
            <person name="Mitchell T.G."/>
            <person name="Pertea M."/>
            <person name="Riggs F.R."/>
            <person name="Salzberg S.L."/>
            <person name="Schein J.E."/>
            <person name="Shvartsbeyn A."/>
            <person name="Shin H."/>
            <person name="Shumway M."/>
            <person name="Specht C.A."/>
            <person name="Suh B.B."/>
            <person name="Tenney A."/>
            <person name="Utterback T.R."/>
            <person name="Wickes B.L."/>
            <person name="Wortman J.R."/>
            <person name="Wye N.H."/>
            <person name="Kronstad J.W."/>
            <person name="Lodge J.K."/>
            <person name="Heitman J."/>
            <person name="Davis R.W."/>
            <person name="Fraser C.M."/>
            <person name="Hyman R.W."/>
        </authorList>
    </citation>
    <scope>NUCLEOTIDE SEQUENCE [LARGE SCALE GENOMIC DNA]</scope>
    <source>
        <strain>JEC21 / ATCC MYA-565</strain>
    </source>
</reference>
<sequence length="153" mass="16987">MPNYYDELEIEDFAWDPVARVFHYPCPCGDRFEISKGQLRDGEEIAICPSCSLIVRVIYDYLDWEDYVTTDDEDDGGSVDTPLSNTSPDPAYPVVVGSAEVESQSKTASSAVSSQKEECTSLSDRLAGLQVESGKEDDPVQEHKREDSSDVLH</sequence>
<feature type="chain" id="PRO_0000082629" description="Diphthamide biosynthesis protein 3">
    <location>
        <begin position="1"/>
        <end position="153"/>
    </location>
</feature>
<feature type="domain" description="DPH-type MB" evidence="3">
    <location>
        <begin position="4"/>
        <end position="60"/>
    </location>
</feature>
<feature type="region of interest" description="Disordered" evidence="4">
    <location>
        <begin position="69"/>
        <end position="153"/>
    </location>
</feature>
<feature type="compositionally biased region" description="Low complexity" evidence="4">
    <location>
        <begin position="104"/>
        <end position="114"/>
    </location>
</feature>
<feature type="compositionally biased region" description="Basic and acidic residues" evidence="4">
    <location>
        <begin position="133"/>
        <end position="153"/>
    </location>
</feature>
<feature type="binding site" evidence="2">
    <location>
        <position position="26"/>
    </location>
    <ligand>
        <name>Fe cation</name>
        <dbReference type="ChEBI" id="CHEBI:24875"/>
    </ligand>
</feature>
<feature type="binding site" evidence="2">
    <location>
        <position position="28"/>
    </location>
    <ligand>
        <name>Fe cation</name>
        <dbReference type="ChEBI" id="CHEBI:24875"/>
    </ligand>
</feature>
<feature type="binding site" evidence="2">
    <location>
        <position position="48"/>
    </location>
    <ligand>
        <name>Fe cation</name>
        <dbReference type="ChEBI" id="CHEBI:24875"/>
    </ligand>
</feature>
<feature type="binding site" evidence="2">
    <location>
        <position position="51"/>
    </location>
    <ligand>
        <name>Fe cation</name>
        <dbReference type="ChEBI" id="CHEBI:24875"/>
    </ligand>
</feature>
<protein>
    <recommendedName>
        <fullName>Diphthamide biosynthesis protein 3</fullName>
    </recommendedName>
</protein>
<organism>
    <name type="scientific">Cryptococcus neoformans var. neoformans serotype D (strain JEC21 / ATCC MYA-565)</name>
    <name type="common">Filobasidiella neoformans</name>
    <dbReference type="NCBI Taxonomy" id="214684"/>
    <lineage>
        <taxon>Eukaryota</taxon>
        <taxon>Fungi</taxon>
        <taxon>Dikarya</taxon>
        <taxon>Basidiomycota</taxon>
        <taxon>Agaricomycotina</taxon>
        <taxon>Tremellomycetes</taxon>
        <taxon>Tremellales</taxon>
        <taxon>Cryptococcaceae</taxon>
        <taxon>Cryptococcus</taxon>
        <taxon>Cryptococcus neoformans species complex</taxon>
    </lineage>
</organism>
<comment type="function">
    <text evidence="2">Required for the first step of diphthamide biosynthesis, a post-translational modification of histidine which occurs in elongation factor 2. DPH1 and DPH2 transfer a 3-amino-3-carboxypropyl (ACP) group from S-adenosyl-L-methionine (SAM) to a histidine residue, the reaction is assisted by a reduction system comprising KTI11/DPH3 and a NADH-dependent reductase, predominantly CBR1. Acts as an electron donor to reduce the Fe-S cluster in DPH1-DPH2 keeping the [4Fe-4S] clusters in the active and reduced state. Restores iron to DPH1-DPH2 iron-sulfur clusters which have degraded from [4Fe-4S] to [3Fe-4S] by donating an iron atom to reform [4Fe-4S] clusters, in a manner dependent on the presence of elongation factor 2 and SAM. Associates with the elongator complex and is required for tRNA Wobble base modifications mediated by the elongator complex. The elongator complex is required for multiple tRNA modifications, including mcm5U (5-methoxycarbonylmethyl uridine), mcm5s 2U (5-methoxycarbonylmethyl-2-thiouridine), and ncm5U (5-carbamoylmethyl uridine).</text>
</comment>
<comment type="catalytic activity">
    <reaction evidence="2">
        <text>[3Fe-4S](1+)-[protein] + Fe(2+)-[Dph3] = [3Fe-4S](0)-[protein] + Fe(3+)-[Dph3]</text>
        <dbReference type="Rhea" id="RHEA:71235"/>
        <dbReference type="Rhea" id="RHEA-COMP:17996"/>
        <dbReference type="Rhea" id="RHEA-COMP:17997"/>
        <dbReference type="Rhea" id="RHEA-COMP:18002"/>
        <dbReference type="Rhea" id="RHEA-COMP:18003"/>
        <dbReference type="ChEBI" id="CHEBI:29033"/>
        <dbReference type="ChEBI" id="CHEBI:29034"/>
        <dbReference type="ChEBI" id="CHEBI:33751"/>
        <dbReference type="ChEBI" id="CHEBI:47402"/>
        <dbReference type="ChEBI" id="CHEBI:83228"/>
    </reaction>
</comment>
<comment type="catalytic activity">
    <reaction evidence="2">
        <text>2 [3Fe-4S](0)-[protein] + 2 Fe(2+)-[Dph3] + NADH = 2 [4Fe-4S](1+)-[protein] + 2 [Dph3] + NAD(+) + H(+)</text>
        <dbReference type="Rhea" id="RHEA:71239"/>
        <dbReference type="Rhea" id="RHEA-COMP:17997"/>
        <dbReference type="Rhea" id="RHEA-COMP:17998"/>
        <dbReference type="Rhea" id="RHEA-COMP:18001"/>
        <dbReference type="Rhea" id="RHEA-COMP:18002"/>
        <dbReference type="ChEBI" id="CHEBI:15378"/>
        <dbReference type="ChEBI" id="CHEBI:29033"/>
        <dbReference type="ChEBI" id="CHEBI:33723"/>
        <dbReference type="ChEBI" id="CHEBI:47402"/>
        <dbReference type="ChEBI" id="CHEBI:57540"/>
        <dbReference type="ChEBI" id="CHEBI:57945"/>
        <dbReference type="ChEBI" id="CHEBI:83228"/>
    </reaction>
</comment>
<comment type="cofactor">
    <cofactor evidence="2">
        <name>Fe(2+)</name>
        <dbReference type="ChEBI" id="CHEBI:29033"/>
    </cofactor>
</comment>
<comment type="pathway">
    <text evidence="2">Protein modification; peptidyl-diphthamide biosynthesis.</text>
</comment>
<comment type="subunit">
    <text evidence="2">Component of the 2-(3-amino-3-carboxypropyl)histidine synthase complex composed of DPH1, DPH2, DPH3 and a NADH-dependent reductase, predominantly CBR1.</text>
</comment>
<comment type="subcellular location">
    <subcellularLocation>
        <location evidence="1">Cytoplasm</location>
    </subcellularLocation>
    <subcellularLocation>
        <location evidence="1">Nucleus</location>
    </subcellularLocation>
</comment>
<comment type="domain">
    <text evidence="2">The DPH-type metal-binding (MB) domain can also bind zinc. However, iron is the physiological binding partner as zinc binding impairs the protein electron donor function.</text>
</comment>
<comment type="similarity">
    <text evidence="5">Belongs to the DPH3 family.</text>
</comment>
<accession>P0CN22</accession>
<accession>Q55ZX7</accession>
<accession>Q5KP86</accession>
<gene>
    <name type="primary">DPH3</name>
    <name type="ordered locus">CNA03820</name>
</gene>
<name>DPH3_CRYNJ</name>
<evidence type="ECO:0000250" key="1"/>
<evidence type="ECO:0000250" key="2">
    <source>
        <dbReference type="UniProtKB" id="Q3E840"/>
    </source>
</evidence>
<evidence type="ECO:0000255" key="3">
    <source>
        <dbReference type="PROSITE-ProRule" id="PRU00456"/>
    </source>
</evidence>
<evidence type="ECO:0000256" key="4">
    <source>
        <dbReference type="SAM" id="MobiDB-lite"/>
    </source>
</evidence>
<evidence type="ECO:0000305" key="5"/>
<proteinExistence type="inferred from homology"/>
<dbReference type="EMBL" id="AE017341">
    <property type="protein sequence ID" value="AAW40902.1"/>
    <property type="molecule type" value="Genomic_DNA"/>
</dbReference>
<dbReference type="RefSeq" id="XP_566721.1">
    <property type="nucleotide sequence ID" value="XM_566721.1"/>
</dbReference>
<dbReference type="SMR" id="P0CN22"/>
<dbReference type="STRING" id="214684.P0CN22"/>
<dbReference type="PaxDb" id="214684-P0CN22"/>
<dbReference type="EnsemblFungi" id="AAW40902">
    <property type="protein sequence ID" value="AAW40902"/>
    <property type="gene ID" value="CNA03820"/>
</dbReference>
<dbReference type="VEuPathDB" id="FungiDB:CNA03820"/>
<dbReference type="eggNOG" id="KOG2923">
    <property type="taxonomic scope" value="Eukaryota"/>
</dbReference>
<dbReference type="HOGENOM" id="CLU_1713169_0_0_1"/>
<dbReference type="InParanoid" id="P0CN22"/>
<dbReference type="OMA" id="SQKEECT"/>
<dbReference type="UniPathway" id="UPA00559"/>
<dbReference type="Proteomes" id="UP000002149">
    <property type="component" value="Chromosome 1"/>
</dbReference>
<dbReference type="GO" id="GO:0005737">
    <property type="term" value="C:cytoplasm"/>
    <property type="evidence" value="ECO:0007669"/>
    <property type="project" value="UniProtKB-SubCell"/>
</dbReference>
<dbReference type="GO" id="GO:0005634">
    <property type="term" value="C:nucleus"/>
    <property type="evidence" value="ECO:0007669"/>
    <property type="project" value="UniProtKB-SubCell"/>
</dbReference>
<dbReference type="GO" id="GO:0008198">
    <property type="term" value="F:ferrous iron binding"/>
    <property type="evidence" value="ECO:0000250"/>
    <property type="project" value="UniProtKB"/>
</dbReference>
<dbReference type="GO" id="GO:0034986">
    <property type="term" value="F:iron chaperone activity"/>
    <property type="evidence" value="ECO:0000250"/>
    <property type="project" value="UniProtKB"/>
</dbReference>
<dbReference type="GO" id="GO:0016491">
    <property type="term" value="F:oxidoreductase activity"/>
    <property type="evidence" value="ECO:0007669"/>
    <property type="project" value="UniProtKB-KW"/>
</dbReference>
<dbReference type="GO" id="GO:0017183">
    <property type="term" value="P:protein histidyl modification to diphthamide"/>
    <property type="evidence" value="ECO:0000250"/>
    <property type="project" value="UniProtKB"/>
</dbReference>
<dbReference type="GO" id="GO:0002926">
    <property type="term" value="P:tRNA wobble base 5-methoxycarbonylmethyl-2-thiouridinylation"/>
    <property type="evidence" value="ECO:0000250"/>
    <property type="project" value="UniProtKB"/>
</dbReference>
<dbReference type="FunFam" id="3.10.660.10:FF:000001">
    <property type="entry name" value="Diphthamide biosynthesis 3"/>
    <property type="match status" value="1"/>
</dbReference>
<dbReference type="Gene3D" id="3.10.660.10">
    <property type="entry name" value="DPH Zinc finger"/>
    <property type="match status" value="1"/>
</dbReference>
<dbReference type="InterPro" id="IPR044248">
    <property type="entry name" value="DPH3/4-like"/>
</dbReference>
<dbReference type="InterPro" id="IPR007872">
    <property type="entry name" value="DPH_MB_dom"/>
</dbReference>
<dbReference type="InterPro" id="IPR036671">
    <property type="entry name" value="DPH_MB_sf"/>
</dbReference>
<dbReference type="PANTHER" id="PTHR21454:SF31">
    <property type="entry name" value="DIPHTHAMIDE BIOSYNTHESIS PROTEIN 3"/>
    <property type="match status" value="1"/>
</dbReference>
<dbReference type="PANTHER" id="PTHR21454">
    <property type="entry name" value="DPH3 HOMOLOG-RELATED"/>
    <property type="match status" value="1"/>
</dbReference>
<dbReference type="Pfam" id="PF05207">
    <property type="entry name" value="Zn_ribbon_CSL"/>
    <property type="match status" value="1"/>
</dbReference>
<dbReference type="SUPFAM" id="SSF144217">
    <property type="entry name" value="CSL zinc finger"/>
    <property type="match status" value="1"/>
</dbReference>
<dbReference type="PROSITE" id="PS51074">
    <property type="entry name" value="DPH_MB"/>
    <property type="match status" value="1"/>
</dbReference>